<reference key="1">
    <citation type="journal article" date="1997" name="Proc. Natl. Acad. Sci. U.S.A.">
        <title>CD27, a member of the tumor necrosis factor receptor family, induces apoptosis and binds to Siva, a proapoptotic protein.</title>
        <authorList>
            <person name="Prasad K.V.S."/>
            <person name="Ao Z."/>
            <person name="Yoon Y."/>
            <person name="Wu M.X."/>
            <person name="Rizk M."/>
            <person name="Jacquot S."/>
            <person name="Schlossman S.F."/>
        </authorList>
    </citation>
    <scope>NUCLEOTIDE SEQUENCE [MRNA] (ISOFORMS 1 AND 2)</scope>
    <scope>INTERACTION WITH CD27</scope>
    <source>
        <tissue>Cervix carcinoma</tissue>
        <tissue>Thymus</tissue>
    </source>
</reference>
<reference key="2">
    <citation type="journal article" date="2004" name="Genome Res.">
        <title>The status, quality, and expansion of the NIH full-length cDNA project: the Mammalian Gene Collection (MGC).</title>
        <authorList>
            <consortium name="The MGC Project Team"/>
        </authorList>
    </citation>
    <scope>NUCLEOTIDE SEQUENCE [LARGE SCALE MRNA] (ISOFORM 2)</scope>
    <source>
        <tissue>Ovary</tissue>
    </source>
</reference>
<reference key="3">
    <citation type="submission" date="2001-07" db="EMBL/GenBank/DDBJ databases">
        <title>Characterization of TPA-responsive genes in U937 cells using ordered differential display PCR.</title>
        <authorList>
            <person name="Kang H.S."/>
            <person name="Park Y.J."/>
            <person name="Jung H.M."/>
            <person name="Jun D.Y."/>
            <person name="Huh T.L."/>
            <person name="Kim Y.H."/>
        </authorList>
    </citation>
    <scope>NUCLEOTIDE SEQUENCE [MRNA] OF 164-175</scope>
    <source>
        <tissue>Monocytic leukemia</tissue>
    </source>
</reference>
<reference key="4">
    <citation type="journal article" date="2000" name="J. Virol.">
        <title>Apoptosis in coxsackievirus B3-caused diseases: interaction between the capsid protein VP2 and the proapoptotic protein siva.</title>
        <authorList>
            <person name="Henke A."/>
            <person name="Launhardt H."/>
            <person name="Klement K."/>
            <person name="Stelzner A."/>
            <person name="Zell R."/>
            <person name="Munder T."/>
        </authorList>
    </citation>
    <scope>INTERACTION WITH COXSACKIEVIRUS B3 VP2</scope>
</reference>
<reference key="5">
    <citation type="journal article" date="2001" name="J. Biol. Chem.">
        <title>The ARG tyrosine kinase interacts with Siva-1 in the apoptotic response to oxidative stress.</title>
        <authorList>
            <person name="Cao C."/>
            <person name="Ren X."/>
            <person name="Kharbanda S."/>
            <person name="Koleske A."/>
            <person name="Prasad K.V.S."/>
            <person name="Kufe D."/>
        </authorList>
    </citation>
    <scope>PHOSPHORYLATION AT TYR-34</scope>
    <scope>MUTAGENESIS OF TYR-34 AND TYR-53</scope>
</reference>
<reference key="6">
    <citation type="journal article" date="2001" name="Virology">
        <title>The apoptotic capability of coxsackievirus B3 is influenced by the efficient interaction between the capsid protein VP2 and the proapoptotic host protein Siva.</title>
        <authorList>
            <person name="Henke A."/>
            <person name="Nestler M."/>
            <person name="Strunze S."/>
            <person name="Saluz H.-P."/>
            <person name="Hortschansky P."/>
            <person name="Menzel B."/>
            <person name="Martin U."/>
            <person name="Zell R."/>
            <person name="Stelzner A."/>
            <person name="Munder T."/>
        </authorList>
    </citation>
    <scope>INTERACTION WITH COXSACKIEVIRUS B3 VP2 (MICROBIAL INFECTION)</scope>
</reference>
<reference key="7">
    <citation type="journal article" date="2002" name="Proc. Natl. Acad. Sci. U.S.A.">
        <title>Siva-1 binds to and inhibits BCL-X(L)-mediated protection against UV radiation-induced apoptosis.</title>
        <authorList>
            <person name="Xue L."/>
            <person name="Chu F."/>
            <person name="Cheng Y."/>
            <person name="Sun X."/>
            <person name="Borthakur A."/>
            <person name="Ramarao M."/>
            <person name="Pandey P."/>
            <person name="Wu M."/>
            <person name="Schlossman S.F."/>
            <person name="Prasad K.V.S."/>
        </authorList>
    </citation>
    <scope>FUNCTION</scope>
    <scope>INTERACTION WITH BCL2L1</scope>
</reference>
<reference key="8">
    <citation type="journal article" date="2004" name="Apoptosis">
        <title>The Siva-1 putative amphipathic helical region (SAH) is sufficient to bind to BCL-XL and sensitize cells to UV radiation induced apoptosis.</title>
        <authorList>
            <person name="Chu F."/>
            <person name="Borthakur A."/>
            <person name="Sun X."/>
            <person name="Barkinge J."/>
            <person name="Gudi R."/>
            <person name="Hawkins S."/>
            <person name="Prasad K.V.S."/>
        </authorList>
    </citation>
    <scope>FUNCTION</scope>
    <scope>INTERACTION WITH BCL2L1</scope>
</reference>
<reference key="9">
    <citation type="journal article" date="2004" name="J. Immunol.">
        <title>Siva-1 and an alternative splice form lacking the death domain, Siva-2, similarly induce apoptosis in T lymphocytes via a caspase-dependent mitochondrial pathway.</title>
        <authorList>
            <person name="Py B."/>
            <person name="Slomianny C."/>
            <person name="Auberger P."/>
            <person name="Petit P.X."/>
            <person name="Benichou S."/>
        </authorList>
    </citation>
    <scope>FUNCTION</scope>
    <scope>SUBCELLULAR LOCATION</scope>
</reference>
<reference key="10">
    <citation type="journal article" date="2005" name="Cancer Res.">
        <title>Expression of Siva-1 protein or its putative amphipathic helical region enhances cisplatin-induced apoptosis in breast cancer cells: effect of elevated levels of BCL-2.</title>
        <authorList>
            <person name="Chu F."/>
            <person name="Barkinge J."/>
            <person name="Hawkins S."/>
            <person name="Gudi R."/>
            <person name="Salgia R."/>
            <person name="Kanteti P.V.S."/>
        </authorList>
    </citation>
    <scope>FUNCTION</scope>
    <scope>POSSIBLE PHARMACEUTICAL USE</scope>
</reference>
<reference key="11">
    <citation type="journal article" date="2006" name="Mol. Cell. Biochem.">
        <title>The zinc containing pro-apoptotic protein siva interacts with the peroxisomal membrane protein pmp22.</title>
        <authorList>
            <person name="Nestler M."/>
            <person name="Martin U."/>
            <person name="Hortschansky P."/>
            <person name="Saluz H.-P."/>
            <person name="Henke A."/>
            <person name="Munder T."/>
        </authorList>
    </citation>
    <scope>ZINC-BINDING</scope>
    <scope>INTERACTION WITH CD27 AND PXMP2</scope>
</reference>
<reference key="12">
    <citation type="journal article" date="2006" name="Oncogene">
        <title>Siva-1 negatively regulates NF-kappaB activity: effect on T-cell receptor-mediated activation-induced cell death (AICD).</title>
        <authorList>
            <person name="Gudi R."/>
            <person name="Barkinge J."/>
            <person name="Hawkins S."/>
            <person name="Chu F."/>
            <person name="Manicassamy S."/>
            <person name="Sun Z."/>
            <person name="Duke-Cohan J.S."/>
            <person name="Prasad K.V.S."/>
        </authorList>
    </citation>
    <scope>FUNCTION</scope>
</reference>
<reference key="13">
    <citation type="journal article" date="2014" name="J. Proteomics">
        <title>An enzyme assisted RP-RPLC approach for in-depth analysis of human liver phosphoproteome.</title>
        <authorList>
            <person name="Bian Y."/>
            <person name="Song C."/>
            <person name="Cheng K."/>
            <person name="Dong M."/>
            <person name="Wang F."/>
            <person name="Huang J."/>
            <person name="Sun D."/>
            <person name="Wang L."/>
            <person name="Ye M."/>
            <person name="Zou H."/>
        </authorList>
    </citation>
    <scope>PHOSPHORYLATION [LARGE SCALE ANALYSIS] AT SER-70</scope>
    <scope>IDENTIFICATION BY MASS SPECTROMETRY [LARGE SCALE ANALYSIS]</scope>
    <source>
        <tissue>Liver</tissue>
    </source>
</reference>
<keyword id="KW-0025">Alternative splicing</keyword>
<keyword id="KW-0053">Apoptosis</keyword>
<keyword id="KW-0963">Cytoplasm</keyword>
<keyword id="KW-0945">Host-virus interaction</keyword>
<keyword id="KW-0479">Metal-binding</keyword>
<keyword id="KW-0539">Nucleus</keyword>
<keyword id="KW-0582">Pharmaceutical</keyword>
<keyword id="KW-0597">Phosphoprotein</keyword>
<keyword id="KW-1267">Proteomics identification</keyword>
<keyword id="KW-1185">Reference proteome</keyword>
<keyword id="KW-0862">Zinc</keyword>
<proteinExistence type="evidence at protein level"/>
<comment type="function">
    <text evidence="4 5 6 7 8">Induces CD27-mediated apoptosis. Inhibits BCL2L1 isoform Bcl-x(L) anti-apoptotic activity. Inhibits activation of NF-kappa-B and promotes T-cell receptor-mediated apoptosis.</text>
</comment>
<comment type="cofactor">
    <molecule>Isoform 1</molecule>
    <cofactor evidence="9">
        <name>Zn(2+)</name>
        <dbReference type="ChEBI" id="CHEBI:29105"/>
    </cofactor>
    <text evidence="9">Isoform 1 binds 3 Zn(2+) ions.</text>
</comment>
<comment type="cofactor">
    <molecule>Isoform 2</molecule>
    <cofactor evidence="9">
        <name>Zn(2+)</name>
        <dbReference type="ChEBI" id="CHEBI:29105"/>
    </cofactor>
    <text evidence="9">Isoform 2 binds 2 Zn(2+) ions.</text>
</comment>
<comment type="subunit">
    <text evidence="1 3 4 5 9 10">Binds through its N-terminal region to the C-terminus of CD27 and to PXMP2/PMP22. Binds to the C-terminus of TNFRSF18/GITR. Isoform 1 binds to BCL2L1/BCLX isoform Bcl-x(L) but not to BAX.</text>
</comment>
<comment type="subunit">
    <text evidence="3">(Microbial infection) Interacts with coxsackievirus B3 capsid protein VP2; this interaction inhibits the binding of SIVA1 to CD27.</text>
</comment>
<comment type="interaction">
    <interactant intactId="EBI-520756">
        <id>O15304</id>
    </interactant>
    <interactant intactId="EBI-77694">
        <id>P10415</id>
        <label>BCL2</label>
    </interactant>
    <organismsDiffer>false</organismsDiffer>
    <experiments>2</experiments>
</comment>
<comment type="interaction">
    <interactant intactId="EBI-520756">
        <id>O15304</id>
    </interactant>
    <interactant intactId="EBI-78035">
        <id>Q07817</id>
        <label>BCL2L1</label>
    </interactant>
    <organismsDiffer>false</organismsDiffer>
    <experiments>2</experiments>
</comment>
<comment type="interaction">
    <interactant intactId="EBI-520756">
        <id>O15304</id>
    </interactant>
    <interactant intactId="EBI-287195">
        <id>Q07817-1</id>
        <label>BCL2L1</label>
    </interactant>
    <organismsDiffer>false</organismsDiffer>
    <experiments>2</experiments>
</comment>
<comment type="interaction">
    <interactant intactId="EBI-520756">
        <id>O15304</id>
    </interactant>
    <interactant intactId="EBI-520729">
        <id>P26842</id>
        <label>CD27</label>
    </interactant>
    <organismsDiffer>false</organismsDiffer>
    <experiments>3</experiments>
</comment>
<comment type="interaction">
    <interactant intactId="EBI-520756">
        <id>O15304</id>
    </interactant>
    <interactant intactId="EBI-1392944">
        <id>Q9NR77</id>
        <label>PXMP2</label>
    </interactant>
    <organismsDiffer>false</organismsDiffer>
    <experiments>3</experiments>
</comment>
<comment type="interaction">
    <interactant intactId="EBI-520756">
        <id>O15304</id>
    </interactant>
    <interactant intactId="EBI-866453">
        <id>P03129</id>
        <label>E7</label>
    </interactant>
    <organismsDiffer>true</organismsDiffer>
    <experiments>4</experiments>
</comment>
<comment type="interaction">
    <interactant intactId="EBI-520766">
        <id>O15304-1</id>
    </interactant>
    <interactant intactId="EBI-287195">
        <id>Q07817-1</id>
        <label>BCL2L1</label>
    </interactant>
    <organismsDiffer>false</organismsDiffer>
    <experiments>5</experiments>
</comment>
<comment type="interaction">
    <interactant intactId="EBI-12372219">
        <id>O15304-2</id>
    </interactant>
    <interactant intactId="EBI-745213">
        <id>P29972</id>
        <label>AQP1</label>
    </interactant>
    <organismsDiffer>false</organismsDiffer>
    <experiments>3</experiments>
</comment>
<comment type="interaction">
    <interactant intactId="EBI-12372219">
        <id>O15304-2</id>
    </interactant>
    <interactant intactId="EBI-11603468">
        <id>Q2NKX9</id>
        <label>C2orf68</label>
    </interactant>
    <organismsDiffer>false</organismsDiffer>
    <experiments>7</experiments>
</comment>
<comment type="interaction">
    <interactant intactId="EBI-12372219">
        <id>O15304-2</id>
    </interactant>
    <interactant intactId="EBI-744545">
        <id>Q8NEC5</id>
        <label>CATSPER1</label>
    </interactant>
    <organismsDiffer>false</organismsDiffer>
    <experiments>3</experiments>
</comment>
<comment type="interaction">
    <interactant intactId="EBI-12372219">
        <id>O15304-2</id>
    </interactant>
    <interactant intactId="EBI-10192698">
        <id>Q02930-3</id>
        <label>CREB5</label>
    </interactant>
    <organismsDiffer>false</organismsDiffer>
    <experiments>3</experiments>
</comment>
<comment type="interaction">
    <interactant intactId="EBI-12372219">
        <id>O15304-2</id>
    </interactant>
    <interactant intactId="EBI-740785">
        <id>P49639</id>
        <label>HOXA1</label>
    </interactant>
    <organismsDiffer>false</organismsDiffer>
    <experiments>3</experiments>
</comment>
<comment type="interaction">
    <interactant intactId="EBI-12372219">
        <id>O15304-2</id>
    </interactant>
    <interactant intactId="EBI-10263367">
        <id>A0A0C4DG38</id>
        <label>ING3</label>
    </interactant>
    <organismsDiffer>false</organismsDiffer>
    <experiments>3</experiments>
</comment>
<comment type="interaction">
    <interactant intactId="EBI-12372219">
        <id>O15304-2</id>
    </interactant>
    <interactant intactId="EBI-3957672">
        <id>Q6PEX3</id>
        <label>KRTAP26-1</label>
    </interactant>
    <organismsDiffer>false</organismsDiffer>
    <experiments>3</experiments>
</comment>
<comment type="interaction">
    <interactant intactId="EBI-12372219">
        <id>O15304-2</id>
    </interactant>
    <interactant intactId="EBI-741158">
        <id>Q96HA8</id>
        <label>NTAQ1</label>
    </interactant>
    <organismsDiffer>false</organismsDiffer>
    <experiments>3</experiments>
</comment>
<comment type="interaction">
    <interactant intactId="EBI-12372219">
        <id>O15304-2</id>
    </interactant>
    <interactant intactId="EBI-11339910">
        <id>Q8IYS1</id>
        <label>PM20D2</label>
    </interactant>
    <organismsDiffer>false</organismsDiffer>
    <experiments>3</experiments>
</comment>
<comment type="interaction">
    <interactant intactId="EBI-12372219">
        <id>O15304-2</id>
    </interactant>
    <interactant intactId="EBI-11952651">
        <id>Q7Z6R9</id>
        <label>TFAP2D</label>
    </interactant>
    <organismsDiffer>false</organismsDiffer>
    <experiments>3</experiments>
</comment>
<comment type="interaction">
    <interactant intactId="EBI-12372219">
        <id>O15304-2</id>
    </interactant>
    <interactant intactId="EBI-740232">
        <id>Q9NWS9-2</id>
        <label>ZNF446</label>
    </interactant>
    <organismsDiffer>false</organismsDiffer>
    <experiments>3</experiments>
</comment>
<comment type="subcellular location">
    <subcellularLocation>
        <location evidence="6">Cytoplasm</location>
    </subcellularLocation>
    <subcellularLocation>
        <location evidence="6">Nucleus</location>
    </subcellularLocation>
    <text>In the nucleus, accumulates in dot-like structures.</text>
</comment>
<comment type="alternative products">
    <event type="alternative splicing"/>
    <isoform>
        <id>O15304-1</id>
        <name>1</name>
        <name>Siva-1</name>
        <sequence type="displayed"/>
    </isoform>
    <isoform>
        <id>O15304-2</id>
        <name>2</name>
        <name>Siva-2</name>
        <sequence type="described" ref="VSP_007525"/>
    </isoform>
</comment>
<comment type="tissue specificity">
    <text>Ubiquitous. Mostly expressed in thymus, testis, ovary, prostate, small intestine and spleen and less in colon.</text>
</comment>
<comment type="PTM">
    <text evidence="2">Phosphorylated by ABL2/ARG in response to oxidative stress.</text>
</comment>
<comment type="pharmaceutical">
    <text>Could be used as a potentiator of cisplatin-based chemotherapy. Enhances cisplatin-mediated apoptosis, even under conditions where cisplatin resistance occurs due to elevated levels of BCL2 or BCL2L1.</text>
</comment>
<comment type="miscellaneous">
    <molecule>Isoform 2</molecule>
    <text evidence="14 15">Mouse isoform 2 has been shown (PubMed:9177220) to have no pro-apoptotic activity. However, human isoform 2 has been shown to be capable of inducing apoptosis (PubMed:15034012).</text>
</comment>
<comment type="sequence caution" evidence="13">
    <conflict type="erroneous initiation">
        <sequence resource="EMBL-CDS" id="AAC51372"/>
    </conflict>
</comment>
<comment type="sequence caution" evidence="13">
    <conflict type="erroneous initiation">
        <sequence resource="EMBL-CDS" id="AAD50057"/>
    </conflict>
</comment>
<organism>
    <name type="scientific">Homo sapiens</name>
    <name type="common">Human</name>
    <dbReference type="NCBI Taxonomy" id="9606"/>
    <lineage>
        <taxon>Eukaryota</taxon>
        <taxon>Metazoa</taxon>
        <taxon>Chordata</taxon>
        <taxon>Craniata</taxon>
        <taxon>Vertebrata</taxon>
        <taxon>Euteleostomi</taxon>
        <taxon>Mammalia</taxon>
        <taxon>Eutheria</taxon>
        <taxon>Euarchontoglires</taxon>
        <taxon>Primates</taxon>
        <taxon>Haplorrhini</taxon>
        <taxon>Catarrhini</taxon>
        <taxon>Hominidae</taxon>
        <taxon>Homo</taxon>
    </lineage>
</organism>
<name>SIVA_HUMAN</name>
<feature type="chain" id="PRO_0000097774" description="Apoptosis regulatory protein Siva">
    <location>
        <begin position="1"/>
        <end position="175"/>
    </location>
</feature>
<feature type="region of interest" description="Interaction with BCL2L1 isoform Bcl-x(L) and inhibition of BCL2L1 anti-apoptotic activity">
    <location>
        <begin position="36"/>
        <end position="55"/>
    </location>
</feature>
<feature type="region of interest" description="Interaction with coxsackievirus B3 VP2">
    <location>
        <begin position="105"/>
        <end position="123"/>
    </location>
</feature>
<feature type="modified residue" description="Phosphotyrosine; by ABL2" evidence="2">
    <location>
        <position position="34"/>
    </location>
</feature>
<feature type="modified residue" description="Phosphoserine" evidence="16">
    <location>
        <position position="70"/>
    </location>
</feature>
<feature type="splice variant" id="VSP_007525" description="In isoform 2." evidence="11 12">
    <location>
        <begin position="40"/>
        <end position="104"/>
    </location>
</feature>
<feature type="mutagenesis site" description="Abolishes phosphorylation and apoptotic activity." evidence="2">
    <original>Y</original>
    <variation>F</variation>
    <location>
        <position position="34"/>
    </location>
</feature>
<feature type="mutagenesis site" description="No effect on phosphorylation or apoptotic activity." evidence="2">
    <original>Y</original>
    <variation>F</variation>
    <location>
        <position position="53"/>
    </location>
</feature>
<protein>
    <recommendedName>
        <fullName>Apoptosis regulatory protein Siva</fullName>
    </recommendedName>
    <alternativeName>
        <fullName>CD27-binding protein</fullName>
        <shortName>CD27BP</shortName>
    </alternativeName>
</protein>
<evidence type="ECO:0000269" key="1">
    <source>
    </source>
</evidence>
<evidence type="ECO:0000269" key="2">
    <source>
    </source>
</evidence>
<evidence type="ECO:0000269" key="3">
    <source>
    </source>
</evidence>
<evidence type="ECO:0000269" key="4">
    <source>
    </source>
</evidence>
<evidence type="ECO:0000269" key="5">
    <source>
    </source>
</evidence>
<evidence type="ECO:0000269" key="6">
    <source>
    </source>
</evidence>
<evidence type="ECO:0000269" key="7">
    <source>
    </source>
</evidence>
<evidence type="ECO:0000269" key="8">
    <source>
    </source>
</evidence>
<evidence type="ECO:0000269" key="9">
    <source>
    </source>
</evidence>
<evidence type="ECO:0000269" key="10">
    <source>
    </source>
</evidence>
<evidence type="ECO:0000303" key="11">
    <source>
    </source>
</evidence>
<evidence type="ECO:0000303" key="12">
    <source>
    </source>
</evidence>
<evidence type="ECO:0000305" key="13"/>
<evidence type="ECO:0000305" key="14">
    <source>
    </source>
</evidence>
<evidence type="ECO:0000305" key="15">
    <source>
    </source>
</evidence>
<evidence type="ECO:0007744" key="16">
    <source>
    </source>
</evidence>
<gene>
    <name type="primary">SIVA1</name>
    <name type="synonym">SIVA</name>
</gene>
<accession>O15304</accession>
<accession>Q96P98</accession>
<accession>Q9UPD6</accession>
<dbReference type="EMBL" id="U82938">
    <property type="protein sequence ID" value="AAC51372.1"/>
    <property type="status" value="ALT_INIT"/>
    <property type="molecule type" value="mRNA"/>
</dbReference>
<dbReference type="EMBL" id="AF033111">
    <property type="protein sequence ID" value="AAD50057.1"/>
    <property type="status" value="ALT_INIT"/>
    <property type="molecule type" value="mRNA"/>
</dbReference>
<dbReference type="EMBL" id="BC034562">
    <property type="protein sequence ID" value="AAH34562.1"/>
    <property type="molecule type" value="mRNA"/>
</dbReference>
<dbReference type="EMBL" id="AF401214">
    <property type="protein sequence ID" value="AAL02171.1"/>
    <property type="molecule type" value="mRNA"/>
</dbReference>
<dbReference type="EMBL" id="BK000018">
    <property type="protein sequence ID" value="DAA01049.1"/>
    <property type="molecule type" value="Genomic_DNA"/>
</dbReference>
<dbReference type="CCDS" id="CCDS9992.1">
    <molecule id="O15304-1"/>
</dbReference>
<dbReference type="CCDS" id="CCDS9993.1">
    <molecule id="O15304-2"/>
</dbReference>
<dbReference type="RefSeq" id="NP_006418.2">
    <molecule id="O15304-1"/>
    <property type="nucleotide sequence ID" value="NM_006427.3"/>
</dbReference>
<dbReference type="RefSeq" id="NP_068355.1">
    <molecule id="O15304-2"/>
    <property type="nucleotide sequence ID" value="NM_021709.3"/>
</dbReference>
<dbReference type="BioGRID" id="115823">
    <property type="interactions" value="51"/>
</dbReference>
<dbReference type="CORUM" id="O15304"/>
<dbReference type="FunCoup" id="O15304">
    <property type="interactions" value="1139"/>
</dbReference>
<dbReference type="IntAct" id="O15304">
    <property type="interactions" value="21"/>
</dbReference>
<dbReference type="MINT" id="O15304"/>
<dbReference type="STRING" id="9606.ENSP00000329213"/>
<dbReference type="DrugBank" id="DB01593">
    <property type="generic name" value="Zinc"/>
</dbReference>
<dbReference type="DrugBank" id="DB14487">
    <property type="generic name" value="Zinc acetate"/>
</dbReference>
<dbReference type="DrugBank" id="DB14533">
    <property type="generic name" value="Zinc chloride"/>
</dbReference>
<dbReference type="DrugBank" id="DB14548">
    <property type="generic name" value="Zinc sulfate, unspecified form"/>
</dbReference>
<dbReference type="GlyGen" id="O15304">
    <property type="glycosylation" value="1 site"/>
</dbReference>
<dbReference type="iPTMnet" id="O15304"/>
<dbReference type="PhosphoSitePlus" id="O15304"/>
<dbReference type="BioMuta" id="SIVA1"/>
<dbReference type="jPOST" id="O15304"/>
<dbReference type="MassIVE" id="O15304"/>
<dbReference type="PaxDb" id="9606-ENSP00000329213"/>
<dbReference type="PeptideAtlas" id="O15304"/>
<dbReference type="ProteomicsDB" id="48572">
    <molecule id="O15304-1"/>
</dbReference>
<dbReference type="ProteomicsDB" id="48573">
    <molecule id="O15304-2"/>
</dbReference>
<dbReference type="Pumba" id="O15304"/>
<dbReference type="Antibodypedia" id="28226">
    <property type="antibodies" value="327 antibodies from 29 providers"/>
</dbReference>
<dbReference type="DNASU" id="10572"/>
<dbReference type="Ensembl" id="ENST00000329967.11">
    <molecule id="O15304-1"/>
    <property type="protein sequence ID" value="ENSP00000329213.6"/>
    <property type="gene ID" value="ENSG00000184990.13"/>
</dbReference>
<dbReference type="Ensembl" id="ENST00000347067.9">
    <molecule id="O15304-2"/>
    <property type="protein sequence ID" value="ENSP00000329447.6"/>
    <property type="gene ID" value="ENSG00000184990.13"/>
</dbReference>
<dbReference type="GeneID" id="10572"/>
<dbReference type="KEGG" id="hsa:10572"/>
<dbReference type="MANE-Select" id="ENST00000329967.11">
    <property type="protein sequence ID" value="ENSP00000329213.6"/>
    <property type="RefSeq nucleotide sequence ID" value="NM_006427.4"/>
    <property type="RefSeq protein sequence ID" value="NP_006418.2"/>
</dbReference>
<dbReference type="UCSC" id="uc001yph.4">
    <molecule id="O15304-1"/>
    <property type="organism name" value="human"/>
</dbReference>
<dbReference type="AGR" id="HGNC:17712"/>
<dbReference type="CTD" id="10572"/>
<dbReference type="DisGeNET" id="10572"/>
<dbReference type="GeneCards" id="SIVA1"/>
<dbReference type="HGNC" id="HGNC:17712">
    <property type="gene designation" value="SIVA1"/>
</dbReference>
<dbReference type="HPA" id="ENSG00000184990">
    <property type="expression patterns" value="Low tissue specificity"/>
</dbReference>
<dbReference type="MIM" id="605567">
    <property type="type" value="gene"/>
</dbReference>
<dbReference type="neXtProt" id="NX_O15304"/>
<dbReference type="OpenTargets" id="ENSG00000184990"/>
<dbReference type="PharmGKB" id="PA162403351"/>
<dbReference type="VEuPathDB" id="HostDB:ENSG00000184990"/>
<dbReference type="eggNOG" id="ENOG502S2B7">
    <property type="taxonomic scope" value="Eukaryota"/>
</dbReference>
<dbReference type="GeneTree" id="ENSGT00390000004842"/>
<dbReference type="HOGENOM" id="CLU_2170136_0_0_1"/>
<dbReference type="InParanoid" id="O15304"/>
<dbReference type="OMA" id="AQACMDP"/>
<dbReference type="OrthoDB" id="60860at2759"/>
<dbReference type="PAN-GO" id="O15304">
    <property type="GO annotations" value="2 GO annotations based on evolutionary models"/>
</dbReference>
<dbReference type="PhylomeDB" id="O15304"/>
<dbReference type="TreeFam" id="TF332962"/>
<dbReference type="PathwayCommons" id="O15304"/>
<dbReference type="SignaLink" id="O15304"/>
<dbReference type="SIGNOR" id="O15304"/>
<dbReference type="BioGRID-ORCS" id="10572">
    <property type="hits" value="75 hits in 1158 CRISPR screens"/>
</dbReference>
<dbReference type="ChiTaRS" id="SIVA1">
    <property type="organism name" value="human"/>
</dbReference>
<dbReference type="GeneWiki" id="SIVA1"/>
<dbReference type="GenomeRNAi" id="10572"/>
<dbReference type="Pharos" id="O15304">
    <property type="development level" value="Tbio"/>
</dbReference>
<dbReference type="PRO" id="PR:O15304"/>
<dbReference type="Proteomes" id="UP000005640">
    <property type="component" value="Chromosome 14"/>
</dbReference>
<dbReference type="RNAct" id="O15304">
    <property type="molecule type" value="protein"/>
</dbReference>
<dbReference type="Bgee" id="ENSG00000184990">
    <property type="expression patterns" value="Expressed in endometrium epithelium and 196 other cell types or tissues"/>
</dbReference>
<dbReference type="ExpressionAtlas" id="O15304">
    <property type="expression patterns" value="baseline and differential"/>
</dbReference>
<dbReference type="GO" id="GO:0005737">
    <property type="term" value="C:cytoplasm"/>
    <property type="evidence" value="ECO:0000314"/>
    <property type="project" value="HGNC-UCL"/>
</dbReference>
<dbReference type="GO" id="GO:0005739">
    <property type="term" value="C:mitochondrion"/>
    <property type="evidence" value="ECO:0000314"/>
    <property type="project" value="HGNC-UCL"/>
</dbReference>
<dbReference type="GO" id="GO:0005654">
    <property type="term" value="C:nucleoplasm"/>
    <property type="evidence" value="ECO:0000314"/>
    <property type="project" value="HGNC-UCL"/>
</dbReference>
<dbReference type="GO" id="GO:0005175">
    <property type="term" value="F:CD27 receptor binding"/>
    <property type="evidence" value="ECO:0000353"/>
    <property type="project" value="HGNC-UCL"/>
</dbReference>
<dbReference type="GO" id="GO:0046872">
    <property type="term" value="F:metal ion binding"/>
    <property type="evidence" value="ECO:0007669"/>
    <property type="project" value="UniProtKB-KW"/>
</dbReference>
<dbReference type="GO" id="GO:0005164">
    <property type="term" value="F:tumor necrosis factor receptor binding"/>
    <property type="evidence" value="ECO:0007669"/>
    <property type="project" value="Ensembl"/>
</dbReference>
<dbReference type="GO" id="GO:0001618">
    <property type="term" value="F:virus receptor activity"/>
    <property type="evidence" value="ECO:0000250"/>
    <property type="project" value="HGNC-UCL"/>
</dbReference>
<dbReference type="GO" id="GO:0008270">
    <property type="term" value="F:zinc ion binding"/>
    <property type="evidence" value="ECO:0000314"/>
    <property type="project" value="HGNC-UCL"/>
</dbReference>
<dbReference type="GO" id="GO:0006924">
    <property type="term" value="P:activation-induced cell death of T cells"/>
    <property type="evidence" value="ECO:0000314"/>
    <property type="project" value="HGNC-UCL"/>
</dbReference>
<dbReference type="GO" id="GO:0097191">
    <property type="term" value="P:extrinsic apoptotic signaling pathway"/>
    <property type="evidence" value="ECO:0000314"/>
    <property type="project" value="BHF-UCL"/>
</dbReference>
<dbReference type="GO" id="GO:0097193">
    <property type="term" value="P:intrinsic apoptotic signaling pathway"/>
    <property type="evidence" value="ECO:0000314"/>
    <property type="project" value="BHF-UCL"/>
</dbReference>
<dbReference type="GO" id="GO:0043124">
    <property type="term" value="P:negative regulation of canonical NF-kappaB signal transduction"/>
    <property type="evidence" value="ECO:0000314"/>
    <property type="project" value="HGNC-UCL"/>
</dbReference>
<dbReference type="GO" id="GO:1901030">
    <property type="term" value="P:positive regulation of mitochondrial outer membrane permeabilization involved in apoptotic signaling pathway"/>
    <property type="evidence" value="ECO:0000314"/>
    <property type="project" value="BHF-UCL"/>
</dbReference>
<dbReference type="GO" id="GO:0070231">
    <property type="term" value="P:T cell apoptotic process"/>
    <property type="evidence" value="ECO:0000315"/>
    <property type="project" value="HGNC-UCL"/>
</dbReference>
<dbReference type="GO" id="GO:0050852">
    <property type="term" value="P:T cell receptor signaling pathway"/>
    <property type="evidence" value="ECO:0000315"/>
    <property type="project" value="HGNC-UCL"/>
</dbReference>
<dbReference type="InterPro" id="IPR022773">
    <property type="entry name" value="Siva"/>
</dbReference>
<dbReference type="PANTHER" id="PTHR14365">
    <property type="entry name" value="APOPTOSIS REGULATORY PROTEIN SIVA"/>
    <property type="match status" value="1"/>
</dbReference>
<dbReference type="PANTHER" id="PTHR14365:SF1">
    <property type="entry name" value="APOPTOSIS REGULATORY PROTEIN SIVA"/>
    <property type="match status" value="1"/>
</dbReference>
<dbReference type="Pfam" id="PF05458">
    <property type="entry name" value="Siva"/>
    <property type="match status" value="1"/>
</dbReference>
<dbReference type="PIRSF" id="PIRSF038096">
    <property type="entry name" value="Siva_cd27_bd"/>
    <property type="match status" value="1"/>
</dbReference>
<sequence>MPKRSCPFADVAPLQLKVRVSQRELSRGVCAERYSQEVFEKTKRLLFLGAQAYLDHVWDEGCAVVHLPESPKPGPTGAPRAARGQMLIGPDGRLIRSLGQASEADPSGVASIACSSCVRAVDGKAVCGQCERALCGQCVRTCWGCGSVACTLCGLVDCSDMYEKVLCTSCAMFET</sequence>